<keyword id="KW-0963">Cytoplasm</keyword>
<keyword id="KW-0648">Protein biosynthesis</keyword>
<keyword id="KW-1185">Reference proteome</keyword>
<comment type="function">
    <text evidence="1">Responsible for the release of ribosomes from messenger RNA at the termination of protein biosynthesis. May increase the efficiency of translation by recycling ribosomes from one round of translation to another.</text>
</comment>
<comment type="subcellular location">
    <subcellularLocation>
        <location evidence="1">Cytoplasm</location>
    </subcellularLocation>
</comment>
<comment type="similarity">
    <text evidence="1">Belongs to the RRF family.</text>
</comment>
<gene>
    <name evidence="1" type="primary">frr</name>
    <name type="ordered locus">OCAR_5958</name>
    <name type="ordered locus">OCA5_c20650</name>
</gene>
<sequence length="183" mass="20399">MTTNGFDINDLKRRMDGAKESLRYELGGLRTGRAAISMLEPVQVEAYGSHMPLNQVATVSVPEPRLLSVQVWDKSMVKAVETAIVNSNLGLNPATEGQVIRLRIPELNEERRKELVKVAHKYAEAARVAVRHVRRDGLDIVKKDKMSEDEQERASGEIQKVTDAAIADIDKLLATKEKEILTV</sequence>
<name>RRF_AFIC5</name>
<protein>
    <recommendedName>
        <fullName evidence="1">Ribosome-recycling factor</fullName>
        <shortName evidence="1">RRF</shortName>
    </recommendedName>
    <alternativeName>
        <fullName evidence="1">Ribosome-releasing factor</fullName>
    </alternativeName>
</protein>
<feature type="chain" id="PRO_1000194943" description="Ribosome-recycling factor">
    <location>
        <begin position="1"/>
        <end position="183"/>
    </location>
</feature>
<proteinExistence type="inferred from homology"/>
<organism>
    <name type="scientific">Afipia carboxidovorans (strain ATCC 49405 / DSM 1227 / KCTC 32145 / OM5)</name>
    <name type="common">Oligotropha carboxidovorans</name>
    <dbReference type="NCBI Taxonomy" id="504832"/>
    <lineage>
        <taxon>Bacteria</taxon>
        <taxon>Pseudomonadati</taxon>
        <taxon>Pseudomonadota</taxon>
        <taxon>Alphaproteobacteria</taxon>
        <taxon>Hyphomicrobiales</taxon>
        <taxon>Nitrobacteraceae</taxon>
        <taxon>Afipia</taxon>
    </lineage>
</organism>
<accession>B6JH69</accession>
<accession>F8BWK4</accession>
<reference key="1">
    <citation type="journal article" date="2008" name="J. Bacteriol.">
        <title>Genome sequence of the chemolithoautotrophic bacterium Oligotropha carboxidovorans OM5T.</title>
        <authorList>
            <person name="Paul D."/>
            <person name="Bridges S."/>
            <person name="Burgess S.C."/>
            <person name="Dandass Y."/>
            <person name="Lawrence M.L."/>
        </authorList>
    </citation>
    <scope>NUCLEOTIDE SEQUENCE [LARGE SCALE GENOMIC DNA]</scope>
    <source>
        <strain>ATCC 49405 / DSM 1227 / KCTC 32145 / OM5</strain>
    </source>
</reference>
<reference key="2">
    <citation type="journal article" date="2011" name="J. Bacteriol.">
        <title>Complete genome sequences of the chemolithoautotrophic Oligotropha carboxidovorans strains OM4 and OM5.</title>
        <authorList>
            <person name="Volland S."/>
            <person name="Rachinger M."/>
            <person name="Strittmatter A."/>
            <person name="Daniel R."/>
            <person name="Gottschalk G."/>
            <person name="Meyer O."/>
        </authorList>
    </citation>
    <scope>NUCLEOTIDE SEQUENCE [LARGE SCALE GENOMIC DNA]</scope>
    <source>
        <strain>ATCC 49405 / DSM 1227 / KCTC 32145 / OM5</strain>
    </source>
</reference>
<dbReference type="EMBL" id="CP001196">
    <property type="protein sequence ID" value="ACI93079.1"/>
    <property type="molecule type" value="Genomic_DNA"/>
</dbReference>
<dbReference type="EMBL" id="CP002826">
    <property type="protein sequence ID" value="AEI06772.1"/>
    <property type="molecule type" value="Genomic_DNA"/>
</dbReference>
<dbReference type="RefSeq" id="WP_012563106.1">
    <property type="nucleotide sequence ID" value="NC_015684.1"/>
</dbReference>
<dbReference type="SMR" id="B6JH69"/>
<dbReference type="STRING" id="504832.OCA5_c20650"/>
<dbReference type="KEGG" id="oca:OCAR_5958"/>
<dbReference type="KEGG" id="ocg:OCA5_c20650"/>
<dbReference type="PATRIC" id="fig|504832.7.peg.2186"/>
<dbReference type="eggNOG" id="COG0233">
    <property type="taxonomic scope" value="Bacteria"/>
</dbReference>
<dbReference type="HOGENOM" id="CLU_073981_2_0_5"/>
<dbReference type="OrthoDB" id="9804006at2"/>
<dbReference type="Proteomes" id="UP000007730">
    <property type="component" value="Chromosome"/>
</dbReference>
<dbReference type="GO" id="GO:0005829">
    <property type="term" value="C:cytosol"/>
    <property type="evidence" value="ECO:0007669"/>
    <property type="project" value="GOC"/>
</dbReference>
<dbReference type="GO" id="GO:0043023">
    <property type="term" value="F:ribosomal large subunit binding"/>
    <property type="evidence" value="ECO:0007669"/>
    <property type="project" value="TreeGrafter"/>
</dbReference>
<dbReference type="GO" id="GO:0002184">
    <property type="term" value="P:cytoplasmic translational termination"/>
    <property type="evidence" value="ECO:0007669"/>
    <property type="project" value="TreeGrafter"/>
</dbReference>
<dbReference type="CDD" id="cd00520">
    <property type="entry name" value="RRF"/>
    <property type="match status" value="1"/>
</dbReference>
<dbReference type="FunFam" id="1.10.132.20:FF:000001">
    <property type="entry name" value="Ribosome-recycling factor"/>
    <property type="match status" value="1"/>
</dbReference>
<dbReference type="FunFam" id="3.30.1360.40:FF:000001">
    <property type="entry name" value="Ribosome-recycling factor"/>
    <property type="match status" value="1"/>
</dbReference>
<dbReference type="Gene3D" id="3.30.1360.40">
    <property type="match status" value="1"/>
</dbReference>
<dbReference type="Gene3D" id="1.10.132.20">
    <property type="entry name" value="Ribosome-recycling factor"/>
    <property type="match status" value="1"/>
</dbReference>
<dbReference type="HAMAP" id="MF_00040">
    <property type="entry name" value="RRF"/>
    <property type="match status" value="1"/>
</dbReference>
<dbReference type="InterPro" id="IPR002661">
    <property type="entry name" value="Ribosome_recyc_fac"/>
</dbReference>
<dbReference type="InterPro" id="IPR023584">
    <property type="entry name" value="Ribosome_recyc_fac_dom"/>
</dbReference>
<dbReference type="InterPro" id="IPR036191">
    <property type="entry name" value="RRF_sf"/>
</dbReference>
<dbReference type="NCBIfam" id="TIGR00496">
    <property type="entry name" value="frr"/>
    <property type="match status" value="1"/>
</dbReference>
<dbReference type="PANTHER" id="PTHR20982:SF3">
    <property type="entry name" value="MITOCHONDRIAL RIBOSOME RECYCLING FACTOR PSEUDO 1"/>
    <property type="match status" value="1"/>
</dbReference>
<dbReference type="PANTHER" id="PTHR20982">
    <property type="entry name" value="RIBOSOME RECYCLING FACTOR"/>
    <property type="match status" value="1"/>
</dbReference>
<dbReference type="Pfam" id="PF01765">
    <property type="entry name" value="RRF"/>
    <property type="match status" value="1"/>
</dbReference>
<dbReference type="SUPFAM" id="SSF55194">
    <property type="entry name" value="Ribosome recycling factor, RRF"/>
    <property type="match status" value="1"/>
</dbReference>
<evidence type="ECO:0000255" key="1">
    <source>
        <dbReference type="HAMAP-Rule" id="MF_00040"/>
    </source>
</evidence>